<feature type="chain" id="PRO_0000326934" description="Protoheme IX farnesyltransferase">
    <location>
        <begin position="1"/>
        <end position="299"/>
    </location>
</feature>
<feature type="transmembrane region" description="Helical" evidence="1">
    <location>
        <begin position="17"/>
        <end position="37"/>
    </location>
</feature>
<feature type="transmembrane region" description="Helical" evidence="1">
    <location>
        <begin position="41"/>
        <end position="61"/>
    </location>
</feature>
<feature type="transmembrane region" description="Helical" evidence="1">
    <location>
        <begin position="91"/>
        <end position="111"/>
    </location>
</feature>
<feature type="transmembrane region" description="Helical" evidence="1">
    <location>
        <begin position="113"/>
        <end position="133"/>
    </location>
</feature>
<feature type="transmembrane region" description="Helical" evidence="1">
    <location>
        <begin position="141"/>
        <end position="161"/>
    </location>
</feature>
<feature type="transmembrane region" description="Helical" evidence="1">
    <location>
        <begin position="168"/>
        <end position="188"/>
    </location>
</feature>
<feature type="transmembrane region" description="Helical" evidence="1">
    <location>
        <begin position="207"/>
        <end position="227"/>
    </location>
</feature>
<feature type="transmembrane region" description="Helical" evidence="1">
    <location>
        <begin position="228"/>
        <end position="248"/>
    </location>
</feature>
<feature type="transmembrane region" description="Helical" evidence="1">
    <location>
        <begin position="266"/>
        <end position="286"/>
    </location>
</feature>
<reference key="1">
    <citation type="journal article" date="2007" name="Science">
        <title>The Calyptogena magnifica chemoautotrophic symbiont genome.</title>
        <authorList>
            <person name="Newton I.L.G."/>
            <person name="Woyke T."/>
            <person name="Auchtung T.A."/>
            <person name="Dilly G.F."/>
            <person name="Dutton R.J."/>
            <person name="Fisher M.C."/>
            <person name="Fontanez K.M."/>
            <person name="Lau E."/>
            <person name="Stewart F.J."/>
            <person name="Richardson P.M."/>
            <person name="Barry K.W."/>
            <person name="Saunders E."/>
            <person name="Detter J.C."/>
            <person name="Wu D."/>
            <person name="Eisen J.A."/>
            <person name="Cavanaugh C.M."/>
        </authorList>
    </citation>
    <scope>NUCLEOTIDE SEQUENCE [LARGE SCALE GENOMIC DNA]</scope>
</reference>
<keyword id="KW-0997">Cell inner membrane</keyword>
<keyword id="KW-1003">Cell membrane</keyword>
<keyword id="KW-0350">Heme biosynthesis</keyword>
<keyword id="KW-0472">Membrane</keyword>
<keyword id="KW-0808">Transferase</keyword>
<keyword id="KW-0812">Transmembrane</keyword>
<keyword id="KW-1133">Transmembrane helix</keyword>
<name>CYOE_RUTMC</name>
<evidence type="ECO:0000255" key="1">
    <source>
        <dbReference type="HAMAP-Rule" id="MF_00154"/>
    </source>
</evidence>
<dbReference type="EC" id="2.5.1.141" evidence="1"/>
<dbReference type="EMBL" id="CP000488">
    <property type="protein sequence ID" value="ABL01833.1"/>
    <property type="molecule type" value="Genomic_DNA"/>
</dbReference>
<dbReference type="RefSeq" id="WP_011737459.1">
    <property type="nucleotide sequence ID" value="NC_008610.1"/>
</dbReference>
<dbReference type="SMR" id="A1AV76"/>
<dbReference type="STRING" id="413404.Rmag_0030"/>
<dbReference type="KEGG" id="rma:Rmag_0030"/>
<dbReference type="eggNOG" id="COG0109">
    <property type="taxonomic scope" value="Bacteria"/>
</dbReference>
<dbReference type="HOGENOM" id="CLU_029631_0_2_6"/>
<dbReference type="OrthoDB" id="9814417at2"/>
<dbReference type="UniPathway" id="UPA00834">
    <property type="reaction ID" value="UER00712"/>
</dbReference>
<dbReference type="Proteomes" id="UP000002587">
    <property type="component" value="Chromosome"/>
</dbReference>
<dbReference type="GO" id="GO:0005886">
    <property type="term" value="C:plasma membrane"/>
    <property type="evidence" value="ECO:0007669"/>
    <property type="project" value="UniProtKB-SubCell"/>
</dbReference>
<dbReference type="GO" id="GO:0008495">
    <property type="term" value="F:protoheme IX farnesyltransferase activity"/>
    <property type="evidence" value="ECO:0007669"/>
    <property type="project" value="UniProtKB-UniRule"/>
</dbReference>
<dbReference type="GO" id="GO:0048034">
    <property type="term" value="P:heme O biosynthetic process"/>
    <property type="evidence" value="ECO:0007669"/>
    <property type="project" value="UniProtKB-UniRule"/>
</dbReference>
<dbReference type="CDD" id="cd13957">
    <property type="entry name" value="PT_UbiA_Cox10"/>
    <property type="match status" value="1"/>
</dbReference>
<dbReference type="FunFam" id="1.10.357.140:FF:000001">
    <property type="entry name" value="Protoheme IX farnesyltransferase"/>
    <property type="match status" value="1"/>
</dbReference>
<dbReference type="Gene3D" id="1.10.357.140">
    <property type="entry name" value="UbiA prenyltransferase"/>
    <property type="match status" value="1"/>
</dbReference>
<dbReference type="HAMAP" id="MF_00154">
    <property type="entry name" value="CyoE_CtaB"/>
    <property type="match status" value="1"/>
</dbReference>
<dbReference type="InterPro" id="IPR006369">
    <property type="entry name" value="Protohaem_IX_farnesylTrfase"/>
</dbReference>
<dbReference type="InterPro" id="IPR000537">
    <property type="entry name" value="UbiA_prenyltransferase"/>
</dbReference>
<dbReference type="InterPro" id="IPR030470">
    <property type="entry name" value="UbiA_prenylTrfase_CS"/>
</dbReference>
<dbReference type="InterPro" id="IPR044878">
    <property type="entry name" value="UbiA_sf"/>
</dbReference>
<dbReference type="NCBIfam" id="TIGR01473">
    <property type="entry name" value="cyoE_ctaB"/>
    <property type="match status" value="1"/>
</dbReference>
<dbReference type="NCBIfam" id="NF003349">
    <property type="entry name" value="PRK04375.1-2"/>
    <property type="match status" value="1"/>
</dbReference>
<dbReference type="PANTHER" id="PTHR43448:SF7">
    <property type="entry name" value="4-HYDROXYBENZOATE SOLANESYLTRANSFERASE"/>
    <property type="match status" value="1"/>
</dbReference>
<dbReference type="PANTHER" id="PTHR43448">
    <property type="entry name" value="PROTOHEME IX FARNESYLTRANSFERASE, MITOCHONDRIAL"/>
    <property type="match status" value="1"/>
</dbReference>
<dbReference type="Pfam" id="PF01040">
    <property type="entry name" value="UbiA"/>
    <property type="match status" value="1"/>
</dbReference>
<dbReference type="PROSITE" id="PS00943">
    <property type="entry name" value="UBIA"/>
    <property type="match status" value="1"/>
</dbReference>
<comment type="function">
    <text evidence="1">Converts heme B (protoheme IX) to heme O by substitution of the vinyl group on carbon 2 of heme B porphyrin ring with a hydroxyethyl farnesyl side group.</text>
</comment>
<comment type="catalytic activity">
    <reaction evidence="1">
        <text>heme b + (2E,6E)-farnesyl diphosphate + H2O = Fe(II)-heme o + diphosphate</text>
        <dbReference type="Rhea" id="RHEA:28070"/>
        <dbReference type="ChEBI" id="CHEBI:15377"/>
        <dbReference type="ChEBI" id="CHEBI:33019"/>
        <dbReference type="ChEBI" id="CHEBI:60344"/>
        <dbReference type="ChEBI" id="CHEBI:60530"/>
        <dbReference type="ChEBI" id="CHEBI:175763"/>
        <dbReference type="EC" id="2.5.1.141"/>
    </reaction>
</comment>
<comment type="pathway">
    <text evidence="1">Porphyrin-containing compound metabolism; heme O biosynthesis; heme O from protoheme: step 1/1.</text>
</comment>
<comment type="subcellular location">
    <subcellularLocation>
        <location evidence="1">Cell inner membrane</location>
        <topology evidence="1">Multi-pass membrane protein</topology>
    </subcellularLocation>
</comment>
<comment type="miscellaneous">
    <text evidence="1">Carbon 2 of the heme B porphyrin ring is defined according to the Fischer nomenclature.</text>
</comment>
<comment type="similarity">
    <text evidence="1">Belongs to the UbiA prenyltransferase family. Protoheme IX farnesyltransferase subfamily.</text>
</comment>
<organism>
    <name type="scientific">Ruthia magnifica subsp. Calyptogena magnifica</name>
    <dbReference type="NCBI Taxonomy" id="413404"/>
    <lineage>
        <taxon>Bacteria</taxon>
        <taxon>Pseudomonadati</taxon>
        <taxon>Pseudomonadota</taxon>
        <taxon>Gammaproteobacteria</taxon>
        <taxon>Candidatus Pseudothioglobaceae</taxon>
        <taxon>Candidatus Ruthturnera</taxon>
    </lineage>
</organism>
<gene>
    <name evidence="1" type="primary">cyoE</name>
    <name type="ordered locus">Rmag_0030</name>
</gene>
<protein>
    <recommendedName>
        <fullName evidence="1">Protoheme IX farnesyltransferase</fullName>
        <ecNumber evidence="1">2.5.1.141</ecNumber>
    </recommendedName>
    <alternativeName>
        <fullName evidence="1">Heme B farnesyltransferase</fullName>
    </alternativeName>
    <alternativeName>
        <fullName evidence="1">Heme O synthase</fullName>
    </alternativeName>
</protein>
<proteinExistence type="inferred from homology"/>
<accession>A1AV76</accession>
<sequence length="299" mass="33045">MIIPLISDLLALCKLKVVALILLTAEVGMFLAVPAPYLPNGLLVLSASIGISMAAASAAVFNHVVDEQIDAQMSRTNKRPLPQGKVSRNQALMWGVFLGLVGLGILQLFVNTITMVLTFVSLIGYAIIYTLYLKRATPQNIVIGGAAGAAPPVLGWTAVSGTQGIEYACLLFLIVFIWTPPHFWALAIHRVEEYKKVDVPMLPVTHGLAYTRTQILLYTVLLLLVSLLPYLASMSGLIYLVVAIALGIRFLMYAIKIYNNPDDKRIAWCTFVYSINYLMLLFVTLLFDHYWLILPLEVF</sequence>